<sequence length="864" mass="95873">MHERYVPADVEAAAQGDWRAADAYKTQEDAQKPKFYCVSMLPYPSGKLHMGHVRNYTINDVMYRYLRMNGYNVLMPMGWDAFGMPAENAAMANGVPPAKWTYDNIDYMKGQMQSMGLAIDWSREIATCKPDYYKWNQWLFLKMLEKGIAYKKTGTVNWDPVDQTVLANEQVIDGRGWRSGALVEKREIPMYYLRITQYADELLNDLDGLGWPERVKIMQQNWIGKSFGVNFGFPYELDGEKQLLRVFTTRADTIMGVTFCAIAAEHPLATRLAQGKPELQAFIDECKRGGVAEADMATMEKKGVATGFSVTHPLTGEPVEVWIGNYVLMSYGEGAVMGVPGHDERDFAFAKKYGLPIKQVIAAEGHTYSLDAWQEWYGDKDIAVCINSGKYDGLGYAAAVDAVAADLKAGGFGDKQVTWRLRDWGISRQRYWGTPIPIIHCPSCGDVPVPEKDLPVVLPEDLVPDGSGNPLAKSEAFLNCTCPKCGAAAKRETDTMDTFVDSSWYFSRYTAPDAETMVDARTDYWMPMDQYIGGIEHAILHLLYSRFWTKVMRDLGLVKFGEPAKNLLTQGMVLNETYYREDAAGKKTWYNPADVTVTHDDKGRPVGATLNADGQPVVLGGIEKMSKSKNNGVDPQVLIDQYGADTARLFTMFAAPPEQQLEWSGAGVEGASRFLRRVWSFGYANREALASRAGFDAAALGDADKALRREIYSVLKQADFDYQRLQYNTVVSAAMKMLNAIDGAKGATPGVLREAYGVLLRVLYPVVPHVTYELWKALGYADEFGPLLDAPWPKVDEAALEQAEIELVLQVNGKVRGALKVAKDASREAIEAAALADDAFAKFGEGKPAKKIVVVPGRLVNIVV</sequence>
<evidence type="ECO:0000255" key="1">
    <source>
        <dbReference type="HAMAP-Rule" id="MF_00049"/>
    </source>
</evidence>
<reference key="1">
    <citation type="submission" date="2007-10" db="EMBL/GenBank/DDBJ databases">
        <title>Complete sequence of chromosome 1 of Burkholderia multivorans ATCC 17616.</title>
        <authorList>
            <person name="Copeland A."/>
            <person name="Lucas S."/>
            <person name="Lapidus A."/>
            <person name="Barry K."/>
            <person name="Glavina del Rio T."/>
            <person name="Dalin E."/>
            <person name="Tice H."/>
            <person name="Pitluck S."/>
            <person name="Chain P."/>
            <person name="Malfatti S."/>
            <person name="Shin M."/>
            <person name="Vergez L."/>
            <person name="Schmutz J."/>
            <person name="Larimer F."/>
            <person name="Land M."/>
            <person name="Hauser L."/>
            <person name="Kyrpides N."/>
            <person name="Kim E."/>
            <person name="Tiedje J."/>
            <person name="Richardson P."/>
        </authorList>
    </citation>
    <scope>NUCLEOTIDE SEQUENCE [LARGE SCALE GENOMIC DNA]</scope>
    <source>
        <strain>ATCC 17616 / 249</strain>
    </source>
</reference>
<reference key="2">
    <citation type="submission" date="2007-04" db="EMBL/GenBank/DDBJ databases">
        <title>Complete genome sequence of Burkholderia multivorans ATCC 17616.</title>
        <authorList>
            <person name="Ohtsubo Y."/>
            <person name="Yamashita A."/>
            <person name="Kurokawa K."/>
            <person name="Takami H."/>
            <person name="Yuhara S."/>
            <person name="Nishiyama E."/>
            <person name="Endo R."/>
            <person name="Miyazaki R."/>
            <person name="Ono A."/>
            <person name="Yano K."/>
            <person name="Ito M."/>
            <person name="Sota M."/>
            <person name="Yuji N."/>
            <person name="Hattori M."/>
            <person name="Tsuda M."/>
        </authorList>
    </citation>
    <scope>NUCLEOTIDE SEQUENCE [LARGE SCALE GENOMIC DNA]</scope>
    <source>
        <strain>ATCC 17616 / 249</strain>
    </source>
</reference>
<proteinExistence type="inferred from homology"/>
<keyword id="KW-0030">Aminoacyl-tRNA synthetase</keyword>
<keyword id="KW-0067">ATP-binding</keyword>
<keyword id="KW-0963">Cytoplasm</keyword>
<keyword id="KW-0436">Ligase</keyword>
<keyword id="KW-0547">Nucleotide-binding</keyword>
<keyword id="KW-0648">Protein biosynthesis</keyword>
<keyword id="KW-1185">Reference proteome</keyword>
<feature type="chain" id="PRO_1000091299" description="Leucine--tRNA ligase">
    <location>
        <begin position="1"/>
        <end position="864"/>
    </location>
</feature>
<feature type="short sequence motif" description="'HIGH' region">
    <location>
        <begin position="42"/>
        <end position="52"/>
    </location>
</feature>
<feature type="short sequence motif" description="'KMSKS' region">
    <location>
        <begin position="624"/>
        <end position="628"/>
    </location>
</feature>
<feature type="binding site" evidence="1">
    <location>
        <position position="627"/>
    </location>
    <ligand>
        <name>ATP</name>
        <dbReference type="ChEBI" id="CHEBI:30616"/>
    </ligand>
</feature>
<comment type="catalytic activity">
    <reaction evidence="1">
        <text>tRNA(Leu) + L-leucine + ATP = L-leucyl-tRNA(Leu) + AMP + diphosphate</text>
        <dbReference type="Rhea" id="RHEA:11688"/>
        <dbReference type="Rhea" id="RHEA-COMP:9613"/>
        <dbReference type="Rhea" id="RHEA-COMP:9622"/>
        <dbReference type="ChEBI" id="CHEBI:30616"/>
        <dbReference type="ChEBI" id="CHEBI:33019"/>
        <dbReference type="ChEBI" id="CHEBI:57427"/>
        <dbReference type="ChEBI" id="CHEBI:78442"/>
        <dbReference type="ChEBI" id="CHEBI:78494"/>
        <dbReference type="ChEBI" id="CHEBI:456215"/>
        <dbReference type="EC" id="6.1.1.4"/>
    </reaction>
</comment>
<comment type="subcellular location">
    <subcellularLocation>
        <location evidence="1">Cytoplasm</location>
    </subcellularLocation>
</comment>
<comment type="similarity">
    <text evidence="1">Belongs to the class-I aminoacyl-tRNA synthetase family.</text>
</comment>
<dbReference type="EC" id="6.1.1.4" evidence="1"/>
<dbReference type="EMBL" id="CP000868">
    <property type="protein sequence ID" value="ABX16416.1"/>
    <property type="molecule type" value="Genomic_DNA"/>
</dbReference>
<dbReference type="EMBL" id="AP009385">
    <property type="protein sequence ID" value="BAG42472.1"/>
    <property type="molecule type" value="Genomic_DNA"/>
</dbReference>
<dbReference type="RefSeq" id="WP_012214125.1">
    <property type="nucleotide sequence ID" value="NC_010084.1"/>
</dbReference>
<dbReference type="SMR" id="A9AHA9"/>
<dbReference type="STRING" id="395019.BMULJ_00505"/>
<dbReference type="KEGG" id="bmj:BMULJ_00505"/>
<dbReference type="KEGG" id="bmu:Bmul_2732"/>
<dbReference type="eggNOG" id="COG0495">
    <property type="taxonomic scope" value="Bacteria"/>
</dbReference>
<dbReference type="HOGENOM" id="CLU_004427_0_0_4"/>
<dbReference type="Proteomes" id="UP000008815">
    <property type="component" value="Chromosome 1"/>
</dbReference>
<dbReference type="GO" id="GO:0005829">
    <property type="term" value="C:cytosol"/>
    <property type="evidence" value="ECO:0007669"/>
    <property type="project" value="TreeGrafter"/>
</dbReference>
<dbReference type="GO" id="GO:0002161">
    <property type="term" value="F:aminoacyl-tRNA deacylase activity"/>
    <property type="evidence" value="ECO:0007669"/>
    <property type="project" value="InterPro"/>
</dbReference>
<dbReference type="GO" id="GO:0005524">
    <property type="term" value="F:ATP binding"/>
    <property type="evidence" value="ECO:0007669"/>
    <property type="project" value="UniProtKB-UniRule"/>
</dbReference>
<dbReference type="GO" id="GO:0004823">
    <property type="term" value="F:leucine-tRNA ligase activity"/>
    <property type="evidence" value="ECO:0007669"/>
    <property type="project" value="UniProtKB-UniRule"/>
</dbReference>
<dbReference type="GO" id="GO:0006429">
    <property type="term" value="P:leucyl-tRNA aminoacylation"/>
    <property type="evidence" value="ECO:0007669"/>
    <property type="project" value="UniProtKB-UniRule"/>
</dbReference>
<dbReference type="CDD" id="cd07958">
    <property type="entry name" value="Anticodon_Ia_Leu_BEm"/>
    <property type="match status" value="1"/>
</dbReference>
<dbReference type="CDD" id="cd00812">
    <property type="entry name" value="LeuRS_core"/>
    <property type="match status" value="1"/>
</dbReference>
<dbReference type="FunFam" id="1.10.730.10:FF:000002">
    <property type="entry name" value="Leucine--tRNA ligase"/>
    <property type="match status" value="1"/>
</dbReference>
<dbReference type="FunFam" id="2.20.28.290:FF:000001">
    <property type="entry name" value="Leucine--tRNA ligase"/>
    <property type="match status" value="1"/>
</dbReference>
<dbReference type="FunFam" id="3.10.20.590:FF:000001">
    <property type="entry name" value="Leucine--tRNA ligase"/>
    <property type="match status" value="1"/>
</dbReference>
<dbReference type="FunFam" id="3.40.50.620:FF:000003">
    <property type="entry name" value="Leucine--tRNA ligase"/>
    <property type="match status" value="1"/>
</dbReference>
<dbReference type="FunFam" id="3.40.50.620:FF:000056">
    <property type="entry name" value="Leucine--tRNA ligase"/>
    <property type="match status" value="1"/>
</dbReference>
<dbReference type="FunFam" id="3.90.740.10:FF:000012">
    <property type="entry name" value="Leucine--tRNA ligase"/>
    <property type="match status" value="1"/>
</dbReference>
<dbReference type="Gene3D" id="2.20.28.290">
    <property type="match status" value="1"/>
</dbReference>
<dbReference type="Gene3D" id="3.10.20.590">
    <property type="match status" value="1"/>
</dbReference>
<dbReference type="Gene3D" id="3.40.50.620">
    <property type="entry name" value="HUPs"/>
    <property type="match status" value="2"/>
</dbReference>
<dbReference type="Gene3D" id="1.10.730.10">
    <property type="entry name" value="Isoleucyl-tRNA Synthetase, Domain 1"/>
    <property type="match status" value="1"/>
</dbReference>
<dbReference type="Gene3D" id="3.90.740.10">
    <property type="entry name" value="Valyl/Leucyl/Isoleucyl-tRNA synthetase, editing domain"/>
    <property type="match status" value="1"/>
</dbReference>
<dbReference type="HAMAP" id="MF_00049_B">
    <property type="entry name" value="Leu_tRNA_synth_B"/>
    <property type="match status" value="1"/>
</dbReference>
<dbReference type="InterPro" id="IPR001412">
    <property type="entry name" value="aa-tRNA-synth_I_CS"/>
</dbReference>
<dbReference type="InterPro" id="IPR002300">
    <property type="entry name" value="aa-tRNA-synth_Ia"/>
</dbReference>
<dbReference type="InterPro" id="IPR002302">
    <property type="entry name" value="Leu-tRNA-ligase"/>
</dbReference>
<dbReference type="InterPro" id="IPR025709">
    <property type="entry name" value="Leu_tRNA-synth_edit"/>
</dbReference>
<dbReference type="InterPro" id="IPR013155">
    <property type="entry name" value="M/V/L/I-tRNA-synth_anticd-bd"/>
</dbReference>
<dbReference type="InterPro" id="IPR015413">
    <property type="entry name" value="Methionyl/Leucyl_tRNA_Synth"/>
</dbReference>
<dbReference type="InterPro" id="IPR014729">
    <property type="entry name" value="Rossmann-like_a/b/a_fold"/>
</dbReference>
<dbReference type="InterPro" id="IPR009080">
    <property type="entry name" value="tRNAsynth_Ia_anticodon-bd"/>
</dbReference>
<dbReference type="InterPro" id="IPR009008">
    <property type="entry name" value="Val/Leu/Ile-tRNA-synth_edit"/>
</dbReference>
<dbReference type="NCBIfam" id="TIGR00396">
    <property type="entry name" value="leuS_bact"/>
    <property type="match status" value="1"/>
</dbReference>
<dbReference type="PANTHER" id="PTHR43740:SF2">
    <property type="entry name" value="LEUCINE--TRNA LIGASE, MITOCHONDRIAL"/>
    <property type="match status" value="1"/>
</dbReference>
<dbReference type="PANTHER" id="PTHR43740">
    <property type="entry name" value="LEUCYL-TRNA SYNTHETASE"/>
    <property type="match status" value="1"/>
</dbReference>
<dbReference type="Pfam" id="PF08264">
    <property type="entry name" value="Anticodon_1"/>
    <property type="match status" value="1"/>
</dbReference>
<dbReference type="Pfam" id="PF00133">
    <property type="entry name" value="tRNA-synt_1"/>
    <property type="match status" value="2"/>
</dbReference>
<dbReference type="Pfam" id="PF13603">
    <property type="entry name" value="tRNA-synt_1_2"/>
    <property type="match status" value="1"/>
</dbReference>
<dbReference type="Pfam" id="PF09334">
    <property type="entry name" value="tRNA-synt_1g"/>
    <property type="match status" value="1"/>
</dbReference>
<dbReference type="PRINTS" id="PR00985">
    <property type="entry name" value="TRNASYNTHLEU"/>
</dbReference>
<dbReference type="SUPFAM" id="SSF47323">
    <property type="entry name" value="Anticodon-binding domain of a subclass of class I aminoacyl-tRNA synthetases"/>
    <property type="match status" value="1"/>
</dbReference>
<dbReference type="SUPFAM" id="SSF52374">
    <property type="entry name" value="Nucleotidylyl transferase"/>
    <property type="match status" value="1"/>
</dbReference>
<dbReference type="SUPFAM" id="SSF50677">
    <property type="entry name" value="ValRS/IleRS/LeuRS editing domain"/>
    <property type="match status" value="1"/>
</dbReference>
<dbReference type="PROSITE" id="PS00178">
    <property type="entry name" value="AA_TRNA_LIGASE_I"/>
    <property type="match status" value="1"/>
</dbReference>
<gene>
    <name evidence="1" type="primary">leuS</name>
    <name type="ordered locus">Bmul_2732</name>
    <name type="ordered locus">BMULJ_00505</name>
</gene>
<organism>
    <name type="scientific">Burkholderia multivorans (strain ATCC 17616 / 249)</name>
    <dbReference type="NCBI Taxonomy" id="395019"/>
    <lineage>
        <taxon>Bacteria</taxon>
        <taxon>Pseudomonadati</taxon>
        <taxon>Pseudomonadota</taxon>
        <taxon>Betaproteobacteria</taxon>
        <taxon>Burkholderiales</taxon>
        <taxon>Burkholderiaceae</taxon>
        <taxon>Burkholderia</taxon>
        <taxon>Burkholderia cepacia complex</taxon>
    </lineage>
</organism>
<accession>A9AHA9</accession>
<name>SYL_BURM1</name>
<protein>
    <recommendedName>
        <fullName evidence="1">Leucine--tRNA ligase</fullName>
        <ecNumber evidence="1">6.1.1.4</ecNumber>
    </recommendedName>
    <alternativeName>
        <fullName evidence="1">Leucyl-tRNA synthetase</fullName>
        <shortName evidence="1">LeuRS</shortName>
    </alternativeName>
</protein>